<reference key="1">
    <citation type="journal article" date="2008" name="DNA Res.">
        <title>Determination of the genome sequence of Porphyromonas gingivalis strain ATCC 33277 and genomic comparison with strain W83 revealed extensive genome rearrangements in P. gingivalis.</title>
        <authorList>
            <person name="Naito M."/>
            <person name="Hirakawa H."/>
            <person name="Yamashita A."/>
            <person name="Ohara N."/>
            <person name="Shoji M."/>
            <person name="Yukitake H."/>
            <person name="Nakayama K."/>
            <person name="Toh H."/>
            <person name="Yoshimura F."/>
            <person name="Kuhara S."/>
            <person name="Hattori M."/>
            <person name="Hayashi T."/>
            <person name="Nakayama K."/>
        </authorList>
    </citation>
    <scope>NUCLEOTIDE SEQUENCE [LARGE SCALE GENOMIC DNA]</scope>
    <source>
        <strain>ATCC 33277 / DSM 20709 / CIP 103683 / JCM 12257 / NCTC 11834 / 2561</strain>
    </source>
</reference>
<dbReference type="EMBL" id="AP009380">
    <property type="protein sequence ID" value="BAG33970.1"/>
    <property type="molecule type" value="Genomic_DNA"/>
</dbReference>
<dbReference type="RefSeq" id="WP_004585060.1">
    <property type="nucleotide sequence ID" value="NZ_CP025930.1"/>
</dbReference>
<dbReference type="SMR" id="B2RKS5"/>
<dbReference type="KEGG" id="pgn:PGN_1451"/>
<dbReference type="eggNOG" id="COG0234">
    <property type="taxonomic scope" value="Bacteria"/>
</dbReference>
<dbReference type="HOGENOM" id="CLU_132825_2_0_10"/>
<dbReference type="OrthoDB" id="9806791at2"/>
<dbReference type="BioCyc" id="PGIN431947:G1G2V-1653-MONOMER"/>
<dbReference type="Proteomes" id="UP000008842">
    <property type="component" value="Chromosome"/>
</dbReference>
<dbReference type="GO" id="GO:0005737">
    <property type="term" value="C:cytoplasm"/>
    <property type="evidence" value="ECO:0007669"/>
    <property type="project" value="UniProtKB-SubCell"/>
</dbReference>
<dbReference type="GO" id="GO:0005524">
    <property type="term" value="F:ATP binding"/>
    <property type="evidence" value="ECO:0007669"/>
    <property type="project" value="InterPro"/>
</dbReference>
<dbReference type="GO" id="GO:0046872">
    <property type="term" value="F:metal ion binding"/>
    <property type="evidence" value="ECO:0007669"/>
    <property type="project" value="TreeGrafter"/>
</dbReference>
<dbReference type="GO" id="GO:0044183">
    <property type="term" value="F:protein folding chaperone"/>
    <property type="evidence" value="ECO:0007669"/>
    <property type="project" value="InterPro"/>
</dbReference>
<dbReference type="GO" id="GO:0051087">
    <property type="term" value="F:protein-folding chaperone binding"/>
    <property type="evidence" value="ECO:0007669"/>
    <property type="project" value="TreeGrafter"/>
</dbReference>
<dbReference type="GO" id="GO:0051082">
    <property type="term" value="F:unfolded protein binding"/>
    <property type="evidence" value="ECO:0007669"/>
    <property type="project" value="TreeGrafter"/>
</dbReference>
<dbReference type="GO" id="GO:0051085">
    <property type="term" value="P:chaperone cofactor-dependent protein refolding"/>
    <property type="evidence" value="ECO:0007669"/>
    <property type="project" value="TreeGrafter"/>
</dbReference>
<dbReference type="CDD" id="cd00320">
    <property type="entry name" value="cpn10"/>
    <property type="match status" value="1"/>
</dbReference>
<dbReference type="FunFam" id="2.30.33.40:FF:000004">
    <property type="entry name" value="10 kDa chaperonin"/>
    <property type="match status" value="1"/>
</dbReference>
<dbReference type="Gene3D" id="2.30.33.40">
    <property type="entry name" value="GroES chaperonin"/>
    <property type="match status" value="1"/>
</dbReference>
<dbReference type="HAMAP" id="MF_00580">
    <property type="entry name" value="CH10"/>
    <property type="match status" value="1"/>
</dbReference>
<dbReference type="InterPro" id="IPR020818">
    <property type="entry name" value="Chaperonin_GroES"/>
</dbReference>
<dbReference type="InterPro" id="IPR037124">
    <property type="entry name" value="Chaperonin_GroES_sf"/>
</dbReference>
<dbReference type="InterPro" id="IPR018369">
    <property type="entry name" value="Chaprnonin_Cpn10_CS"/>
</dbReference>
<dbReference type="InterPro" id="IPR011032">
    <property type="entry name" value="GroES-like_sf"/>
</dbReference>
<dbReference type="NCBIfam" id="NF001531">
    <property type="entry name" value="PRK00364.2-2"/>
    <property type="match status" value="1"/>
</dbReference>
<dbReference type="NCBIfam" id="NF001533">
    <property type="entry name" value="PRK00364.2-4"/>
    <property type="match status" value="1"/>
</dbReference>
<dbReference type="PANTHER" id="PTHR10772">
    <property type="entry name" value="10 KDA HEAT SHOCK PROTEIN"/>
    <property type="match status" value="1"/>
</dbReference>
<dbReference type="PANTHER" id="PTHR10772:SF58">
    <property type="entry name" value="CO-CHAPERONIN GROES"/>
    <property type="match status" value="1"/>
</dbReference>
<dbReference type="Pfam" id="PF00166">
    <property type="entry name" value="Cpn10"/>
    <property type="match status" value="1"/>
</dbReference>
<dbReference type="PRINTS" id="PR00297">
    <property type="entry name" value="CHAPERONIN10"/>
</dbReference>
<dbReference type="SMART" id="SM00883">
    <property type="entry name" value="Cpn10"/>
    <property type="match status" value="1"/>
</dbReference>
<dbReference type="SUPFAM" id="SSF50129">
    <property type="entry name" value="GroES-like"/>
    <property type="match status" value="1"/>
</dbReference>
<dbReference type="PROSITE" id="PS00681">
    <property type="entry name" value="CHAPERONINS_CPN10"/>
    <property type="match status" value="1"/>
</dbReference>
<comment type="function">
    <text evidence="1">Together with the chaperonin GroEL, plays an essential role in assisting protein folding. The GroEL-GroES system forms a nano-cage that allows encapsulation of the non-native substrate proteins and provides a physical environment optimized to promote and accelerate protein folding. GroES binds to the apical surface of the GroEL ring, thereby capping the opening of the GroEL channel.</text>
</comment>
<comment type="subunit">
    <text evidence="1">Heptamer of 7 subunits arranged in a ring. Interacts with the chaperonin GroEL.</text>
</comment>
<comment type="subcellular location">
    <subcellularLocation>
        <location evidence="1">Cytoplasm</location>
    </subcellularLocation>
</comment>
<comment type="similarity">
    <text evidence="1">Belongs to the GroES chaperonin family.</text>
</comment>
<keyword id="KW-0143">Chaperone</keyword>
<keyword id="KW-0963">Cytoplasm</keyword>
<gene>
    <name evidence="1" type="primary">groES</name>
    <name evidence="1" type="synonym">groS</name>
    <name type="ordered locus">PGN_1451</name>
</gene>
<feature type="chain" id="PRO_1000129690" description="Co-chaperonin GroES">
    <location>
        <begin position="1"/>
        <end position="89"/>
    </location>
</feature>
<sequence>MNIKPLADRVLVKPAAAEEKTVSGIIIPDSAKEKPLKGEVIAVGNGTKDEEMVLKAGDTVLYGKYAGTEIELEGEKYIIMRQNDVLAII</sequence>
<evidence type="ECO:0000255" key="1">
    <source>
        <dbReference type="HAMAP-Rule" id="MF_00580"/>
    </source>
</evidence>
<protein>
    <recommendedName>
        <fullName evidence="1">Co-chaperonin GroES</fullName>
    </recommendedName>
    <alternativeName>
        <fullName evidence="1">10 kDa chaperonin</fullName>
    </alternativeName>
    <alternativeName>
        <fullName evidence="1">Chaperonin-10</fullName>
        <shortName evidence="1">Cpn10</shortName>
    </alternativeName>
</protein>
<organism>
    <name type="scientific">Porphyromonas gingivalis (strain ATCC 33277 / DSM 20709 / CIP 103683 / JCM 12257 / NCTC 11834 / 2561)</name>
    <dbReference type="NCBI Taxonomy" id="431947"/>
    <lineage>
        <taxon>Bacteria</taxon>
        <taxon>Pseudomonadati</taxon>
        <taxon>Bacteroidota</taxon>
        <taxon>Bacteroidia</taxon>
        <taxon>Bacteroidales</taxon>
        <taxon>Porphyromonadaceae</taxon>
        <taxon>Porphyromonas</taxon>
    </lineage>
</organism>
<name>CH10_PORG3</name>
<proteinExistence type="inferred from homology"/>
<accession>B2RKS5</accession>